<sequence>MAKKALIEKSKRTPKYKTREYSRCKVCGRPRAVYREFGLCRICFREQALEGKLPGVKKASW</sequence>
<evidence type="ECO:0000255" key="1">
    <source>
        <dbReference type="HAMAP-Rule" id="MF_01364"/>
    </source>
</evidence>
<evidence type="ECO:0000305" key="2"/>
<gene>
    <name evidence="1" type="primary">rpsZ</name>
    <name evidence="1" type="synonym">rpsN</name>
    <name type="ordered locus">Pmob_0777</name>
</gene>
<keyword id="KW-0479">Metal-binding</keyword>
<keyword id="KW-0687">Ribonucleoprotein</keyword>
<keyword id="KW-0689">Ribosomal protein</keyword>
<keyword id="KW-0694">RNA-binding</keyword>
<keyword id="KW-0699">rRNA-binding</keyword>
<keyword id="KW-0862">Zinc</keyword>
<feature type="chain" id="PRO_1000087018" description="Small ribosomal subunit protein uS14">
    <location>
        <begin position="1"/>
        <end position="61"/>
    </location>
</feature>
<feature type="binding site" evidence="1">
    <location>
        <position position="24"/>
    </location>
    <ligand>
        <name>Zn(2+)</name>
        <dbReference type="ChEBI" id="CHEBI:29105"/>
    </ligand>
</feature>
<feature type="binding site" evidence="1">
    <location>
        <position position="27"/>
    </location>
    <ligand>
        <name>Zn(2+)</name>
        <dbReference type="ChEBI" id="CHEBI:29105"/>
    </ligand>
</feature>
<feature type="binding site" evidence="1">
    <location>
        <position position="40"/>
    </location>
    <ligand>
        <name>Zn(2+)</name>
        <dbReference type="ChEBI" id="CHEBI:29105"/>
    </ligand>
</feature>
<feature type="binding site" evidence="1">
    <location>
        <position position="43"/>
    </location>
    <ligand>
        <name>Zn(2+)</name>
        <dbReference type="ChEBI" id="CHEBI:29105"/>
    </ligand>
</feature>
<accession>A9BG05</accession>
<reference key="1">
    <citation type="submission" date="2007-11" db="EMBL/GenBank/DDBJ databases">
        <title>Complete sequence of Petroga mobilis SJ95.</title>
        <authorList>
            <consortium name="US DOE Joint Genome Institute"/>
            <person name="Copeland A."/>
            <person name="Lucas S."/>
            <person name="Lapidus A."/>
            <person name="Barry K."/>
            <person name="Glavina del Rio T."/>
            <person name="Dalin E."/>
            <person name="Tice H."/>
            <person name="Pitluck S."/>
            <person name="Meincke L."/>
            <person name="Brettin T."/>
            <person name="Bruce D."/>
            <person name="Detter J.C."/>
            <person name="Han C."/>
            <person name="Kuske C.R."/>
            <person name="Schmutz J."/>
            <person name="Larimer F."/>
            <person name="Land M."/>
            <person name="Hauser L."/>
            <person name="Kyrpides N."/>
            <person name="Mikhailova N."/>
            <person name="Noll K."/>
            <person name="Richardson P."/>
        </authorList>
    </citation>
    <scope>NUCLEOTIDE SEQUENCE [LARGE SCALE GENOMIC DNA]</scope>
    <source>
        <strain>DSM 10674 / SJ95</strain>
    </source>
</reference>
<dbReference type="EMBL" id="CP000879">
    <property type="protein sequence ID" value="ABX31501.1"/>
    <property type="molecule type" value="Genomic_DNA"/>
</dbReference>
<dbReference type="RefSeq" id="WP_012208604.1">
    <property type="nucleotide sequence ID" value="NC_010003.1"/>
</dbReference>
<dbReference type="SMR" id="A9BG05"/>
<dbReference type="STRING" id="403833.Pmob_0777"/>
<dbReference type="KEGG" id="pmo:Pmob_0777"/>
<dbReference type="eggNOG" id="COG0199">
    <property type="taxonomic scope" value="Bacteria"/>
</dbReference>
<dbReference type="HOGENOM" id="CLU_139869_3_0_0"/>
<dbReference type="OrthoDB" id="9810484at2"/>
<dbReference type="Proteomes" id="UP000000789">
    <property type="component" value="Chromosome"/>
</dbReference>
<dbReference type="GO" id="GO:0005737">
    <property type="term" value="C:cytoplasm"/>
    <property type="evidence" value="ECO:0007669"/>
    <property type="project" value="UniProtKB-ARBA"/>
</dbReference>
<dbReference type="GO" id="GO:0015935">
    <property type="term" value="C:small ribosomal subunit"/>
    <property type="evidence" value="ECO:0007669"/>
    <property type="project" value="TreeGrafter"/>
</dbReference>
<dbReference type="GO" id="GO:0019843">
    <property type="term" value="F:rRNA binding"/>
    <property type="evidence" value="ECO:0007669"/>
    <property type="project" value="UniProtKB-UniRule"/>
</dbReference>
<dbReference type="GO" id="GO:0003735">
    <property type="term" value="F:structural constituent of ribosome"/>
    <property type="evidence" value="ECO:0007669"/>
    <property type="project" value="InterPro"/>
</dbReference>
<dbReference type="GO" id="GO:0008270">
    <property type="term" value="F:zinc ion binding"/>
    <property type="evidence" value="ECO:0007669"/>
    <property type="project" value="UniProtKB-UniRule"/>
</dbReference>
<dbReference type="GO" id="GO:0006412">
    <property type="term" value="P:translation"/>
    <property type="evidence" value="ECO:0007669"/>
    <property type="project" value="UniProtKB-UniRule"/>
</dbReference>
<dbReference type="FunFam" id="4.10.830.10:FF:000001">
    <property type="entry name" value="30S ribosomal protein S14 type Z"/>
    <property type="match status" value="1"/>
</dbReference>
<dbReference type="Gene3D" id="4.10.830.10">
    <property type="entry name" value="30s Ribosomal Protein S14, Chain N"/>
    <property type="match status" value="1"/>
</dbReference>
<dbReference type="HAMAP" id="MF_01364_B">
    <property type="entry name" value="Ribosomal_uS14_2_B"/>
    <property type="match status" value="1"/>
</dbReference>
<dbReference type="InterPro" id="IPR001209">
    <property type="entry name" value="Ribosomal_uS14"/>
</dbReference>
<dbReference type="InterPro" id="IPR023053">
    <property type="entry name" value="Ribosomal_uS14_bact"/>
</dbReference>
<dbReference type="InterPro" id="IPR018271">
    <property type="entry name" value="Ribosomal_uS14_CS"/>
</dbReference>
<dbReference type="InterPro" id="IPR043140">
    <property type="entry name" value="Ribosomal_uS14_sf"/>
</dbReference>
<dbReference type="NCBIfam" id="NF005974">
    <property type="entry name" value="PRK08061.1"/>
    <property type="match status" value="1"/>
</dbReference>
<dbReference type="PANTHER" id="PTHR19836">
    <property type="entry name" value="30S RIBOSOMAL PROTEIN S14"/>
    <property type="match status" value="1"/>
</dbReference>
<dbReference type="PANTHER" id="PTHR19836:SF19">
    <property type="entry name" value="SMALL RIBOSOMAL SUBUNIT PROTEIN US14M"/>
    <property type="match status" value="1"/>
</dbReference>
<dbReference type="Pfam" id="PF00253">
    <property type="entry name" value="Ribosomal_S14"/>
    <property type="match status" value="1"/>
</dbReference>
<dbReference type="SUPFAM" id="SSF57716">
    <property type="entry name" value="Glucocorticoid receptor-like (DNA-binding domain)"/>
    <property type="match status" value="1"/>
</dbReference>
<dbReference type="PROSITE" id="PS00527">
    <property type="entry name" value="RIBOSOMAL_S14"/>
    <property type="match status" value="1"/>
</dbReference>
<protein>
    <recommendedName>
        <fullName evidence="1">Small ribosomal subunit protein uS14</fullName>
    </recommendedName>
    <alternativeName>
        <fullName evidence="2">30S ribosomal protein S14 type Z</fullName>
    </alternativeName>
</protein>
<name>RS14Z_PETMO</name>
<organism>
    <name type="scientific">Petrotoga mobilis (strain DSM 10674 / SJ95)</name>
    <dbReference type="NCBI Taxonomy" id="403833"/>
    <lineage>
        <taxon>Bacteria</taxon>
        <taxon>Thermotogati</taxon>
        <taxon>Thermotogota</taxon>
        <taxon>Thermotogae</taxon>
        <taxon>Petrotogales</taxon>
        <taxon>Petrotogaceae</taxon>
        <taxon>Petrotoga</taxon>
    </lineage>
</organism>
<proteinExistence type="inferred from homology"/>
<comment type="function">
    <text evidence="1">Binds 16S rRNA, required for the assembly of 30S particles and may also be responsible for determining the conformation of the 16S rRNA at the A site.</text>
</comment>
<comment type="cofactor">
    <cofactor evidence="1">
        <name>Zn(2+)</name>
        <dbReference type="ChEBI" id="CHEBI:29105"/>
    </cofactor>
    <text evidence="1">Binds 1 zinc ion per subunit.</text>
</comment>
<comment type="subunit">
    <text evidence="1">Part of the 30S ribosomal subunit. Contacts proteins S3 and S10.</text>
</comment>
<comment type="similarity">
    <text evidence="1">Belongs to the universal ribosomal protein uS14 family. Zinc-binding uS14 subfamily.</text>
</comment>